<dbReference type="EMBL" id="AY358781">
    <property type="protein sequence ID" value="AAQ89141.1"/>
    <property type="molecule type" value="mRNA"/>
</dbReference>
<dbReference type="EMBL" id="AK172816">
    <property type="protein sequence ID" value="BAD18786.1"/>
    <property type="molecule type" value="mRNA"/>
</dbReference>
<dbReference type="EMBL" id="AK075067">
    <property type="protein sequence ID" value="BAC11382.1"/>
    <property type="molecule type" value="mRNA"/>
</dbReference>
<dbReference type="EMBL" id="AK315170">
    <property type="protein sequence ID" value="BAG37612.1"/>
    <property type="molecule type" value="mRNA"/>
</dbReference>
<dbReference type="EMBL" id="CH236959">
    <property type="protein sequence ID" value="EAL23784.1"/>
    <property type="molecule type" value="Genomic_DNA"/>
</dbReference>
<dbReference type="EMBL" id="CH471198">
    <property type="protein sequence ID" value="EAW51871.1"/>
    <property type="molecule type" value="Genomic_DNA"/>
</dbReference>
<dbReference type="EMBL" id="CH471198">
    <property type="protein sequence ID" value="EAW51873.1"/>
    <property type="molecule type" value="Genomic_DNA"/>
</dbReference>
<dbReference type="EMBL" id="CH471198">
    <property type="protein sequence ID" value="EAW51875.1"/>
    <property type="molecule type" value="Genomic_DNA"/>
</dbReference>
<dbReference type="EMBL" id="BC016719">
    <property type="protein sequence ID" value="AAH16719.1"/>
    <property type="status" value="ALT_INIT"/>
    <property type="molecule type" value="mRNA"/>
</dbReference>
<dbReference type="EMBL" id="BC035517">
    <property type="protein sequence ID" value="AAH35517.1"/>
    <property type="molecule type" value="mRNA"/>
</dbReference>
<dbReference type="CCDS" id="CCDS5878.1"/>
<dbReference type="RefSeq" id="NP_001229702.1">
    <property type="nucleotide sequence ID" value="NM_001242773.2"/>
</dbReference>
<dbReference type="RefSeq" id="NP_001229703.1">
    <property type="nucleotide sequence ID" value="NM_001242774.3"/>
</dbReference>
<dbReference type="RefSeq" id="NP_001229704.1">
    <property type="nucleotide sequence ID" value="NM_001242775.3"/>
</dbReference>
<dbReference type="RefSeq" id="NP_001269805.1">
    <property type="nucleotide sequence ID" value="NM_001282876.2"/>
</dbReference>
<dbReference type="RefSeq" id="NP_001269806.1">
    <property type="nucleotide sequence ID" value="NM_001282877.1"/>
</dbReference>
<dbReference type="RefSeq" id="NP_699176.1">
    <property type="nucleotide sequence ID" value="NM_153345.3"/>
</dbReference>
<dbReference type="SMR" id="Q8IV31"/>
<dbReference type="BioGRID" id="126439">
    <property type="interactions" value="47"/>
</dbReference>
<dbReference type="FunCoup" id="Q8IV31">
    <property type="interactions" value="25"/>
</dbReference>
<dbReference type="IntAct" id="Q8IV31">
    <property type="interactions" value="43"/>
</dbReference>
<dbReference type="MINT" id="Q8IV31"/>
<dbReference type="STRING" id="9606.ENSP00000352284"/>
<dbReference type="TCDB" id="8.A.60.1.1">
    <property type="family name" value="the transmembrane protein 139 (tmem139) family"/>
</dbReference>
<dbReference type="iPTMnet" id="Q8IV31"/>
<dbReference type="PhosphoSitePlus" id="Q8IV31"/>
<dbReference type="BioMuta" id="TMEM139"/>
<dbReference type="DMDM" id="74728027"/>
<dbReference type="jPOST" id="Q8IV31"/>
<dbReference type="MassIVE" id="Q8IV31"/>
<dbReference type="PaxDb" id="9606-ENSP00000352284"/>
<dbReference type="PeptideAtlas" id="Q8IV31"/>
<dbReference type="ProteomicsDB" id="70645"/>
<dbReference type="Antibodypedia" id="46282">
    <property type="antibodies" value="59 antibodies from 16 providers"/>
</dbReference>
<dbReference type="DNASU" id="135932"/>
<dbReference type="Ensembl" id="ENST00000359333.8">
    <property type="protein sequence ID" value="ENSP00000352284.3"/>
    <property type="gene ID" value="ENSG00000178826.11"/>
</dbReference>
<dbReference type="Ensembl" id="ENST00000409102.5">
    <property type="protein sequence ID" value="ENSP00000386879.1"/>
    <property type="gene ID" value="ENSG00000178826.11"/>
</dbReference>
<dbReference type="Ensembl" id="ENST00000409244.5">
    <property type="protein sequence ID" value="ENSP00000386335.1"/>
    <property type="gene ID" value="ENSG00000178826.11"/>
</dbReference>
<dbReference type="Ensembl" id="ENST00000409541.5">
    <property type="protein sequence ID" value="ENSP00000387044.1"/>
    <property type="gene ID" value="ENSG00000178826.11"/>
</dbReference>
<dbReference type="Ensembl" id="ENST00000410004.1">
    <property type="protein sequence ID" value="ENSP00000386564.1"/>
    <property type="gene ID" value="ENSG00000178826.11"/>
</dbReference>
<dbReference type="GeneID" id="135932"/>
<dbReference type="KEGG" id="hsa:135932"/>
<dbReference type="MANE-Select" id="ENST00000359333.8">
    <property type="protein sequence ID" value="ENSP00000352284.3"/>
    <property type="RefSeq nucleotide sequence ID" value="NM_001282876.2"/>
    <property type="RefSeq protein sequence ID" value="NP_001269805.1"/>
</dbReference>
<dbReference type="UCSC" id="uc003wck.6">
    <property type="organism name" value="human"/>
</dbReference>
<dbReference type="AGR" id="HGNC:22058"/>
<dbReference type="CTD" id="135932"/>
<dbReference type="DisGeNET" id="135932"/>
<dbReference type="GeneCards" id="TMEM139"/>
<dbReference type="HGNC" id="HGNC:22058">
    <property type="gene designation" value="TMEM139"/>
</dbReference>
<dbReference type="HPA" id="ENSG00000178826">
    <property type="expression patterns" value="Tissue enhanced (intestine, kidney)"/>
</dbReference>
<dbReference type="MIM" id="616524">
    <property type="type" value="gene"/>
</dbReference>
<dbReference type="neXtProt" id="NX_Q8IV31"/>
<dbReference type="OpenTargets" id="ENSG00000178826"/>
<dbReference type="PharmGKB" id="PA144596260"/>
<dbReference type="VEuPathDB" id="HostDB:ENSG00000178826"/>
<dbReference type="eggNOG" id="ENOG502S6ZG">
    <property type="taxonomic scope" value="Eukaryota"/>
</dbReference>
<dbReference type="GeneTree" id="ENSGT00390000002723"/>
<dbReference type="HOGENOM" id="CLU_121737_0_0_1"/>
<dbReference type="InParanoid" id="Q8IV31"/>
<dbReference type="OMA" id="FYEDNWT"/>
<dbReference type="OrthoDB" id="9451194at2759"/>
<dbReference type="PAN-GO" id="Q8IV31">
    <property type="GO annotations" value="0 GO annotations based on evolutionary models"/>
</dbReference>
<dbReference type="PhylomeDB" id="Q8IV31"/>
<dbReference type="TreeFam" id="TF338466"/>
<dbReference type="PathwayCommons" id="Q8IV31"/>
<dbReference type="SignaLink" id="Q8IV31"/>
<dbReference type="BioGRID-ORCS" id="135932">
    <property type="hits" value="9 hits in 1147 CRISPR screens"/>
</dbReference>
<dbReference type="GenomeRNAi" id="135932"/>
<dbReference type="Pharos" id="Q8IV31">
    <property type="development level" value="Tdark"/>
</dbReference>
<dbReference type="PRO" id="PR:Q8IV31"/>
<dbReference type="Proteomes" id="UP000005640">
    <property type="component" value="Chromosome 7"/>
</dbReference>
<dbReference type="RNAct" id="Q8IV31">
    <property type="molecule type" value="protein"/>
</dbReference>
<dbReference type="Bgee" id="ENSG00000178826">
    <property type="expression patterns" value="Expressed in ileal mucosa and 133 other cell types or tissues"/>
</dbReference>
<dbReference type="GO" id="GO:0016020">
    <property type="term" value="C:membrane"/>
    <property type="evidence" value="ECO:0007669"/>
    <property type="project" value="UniProtKB-SubCell"/>
</dbReference>
<dbReference type="InterPro" id="IPR038805">
    <property type="entry name" value="TMEM139"/>
</dbReference>
<dbReference type="PANTHER" id="PTHR36294">
    <property type="entry name" value="TRANSMEMBRANE PROTEIN 139"/>
    <property type="match status" value="1"/>
</dbReference>
<dbReference type="PANTHER" id="PTHR36294:SF1">
    <property type="entry name" value="TRANSMEMBRANE PROTEIN 139"/>
    <property type="match status" value="1"/>
</dbReference>
<sequence length="216" mass="23729">MVPMHLLGRLEKPLLLLCCASFLLGLALLGIKTDITPVAYFFLTLGGFFLFAYLLVRFLEWGLRSQLQSMQTESPGPSGNARDNEAFEVPVYEEAVVGLESQCRPQELDQPPPYSTVVIPPAPEEEQPSHPEGSRRAKLEQRRMASEGSMAQEGSPGRAPINLRLRGPRAVSTAPDLQSLAAVPTLEPLTPPPAYDVCFGHPDDDSVFYEDNWAPP</sequence>
<organism>
    <name type="scientific">Homo sapiens</name>
    <name type="common">Human</name>
    <dbReference type="NCBI Taxonomy" id="9606"/>
    <lineage>
        <taxon>Eukaryota</taxon>
        <taxon>Metazoa</taxon>
        <taxon>Chordata</taxon>
        <taxon>Craniata</taxon>
        <taxon>Vertebrata</taxon>
        <taxon>Euteleostomi</taxon>
        <taxon>Mammalia</taxon>
        <taxon>Eutheria</taxon>
        <taxon>Euarchontoglires</taxon>
        <taxon>Primates</taxon>
        <taxon>Haplorrhini</taxon>
        <taxon>Catarrhini</taxon>
        <taxon>Hominidae</taxon>
        <taxon>Homo</taxon>
    </lineage>
</organism>
<accession>Q8IV31</accession>
<accession>B2RCL5</accession>
<accession>D3DXD4</accession>
<accession>Q6ZME2</accession>
<accession>Q8NC22</accession>
<accession>Q96AU8</accession>
<gene>
    <name type="primary">TMEM139</name>
    <name type="ORF">UNQ1932/PRO4407</name>
</gene>
<protein>
    <recommendedName>
        <fullName>Transmembrane protein 139</fullName>
    </recommendedName>
</protein>
<evidence type="ECO:0000255" key="1"/>
<evidence type="ECO:0000256" key="2">
    <source>
        <dbReference type="SAM" id="MobiDB-lite"/>
    </source>
</evidence>
<evidence type="ECO:0000269" key="3">
    <source>
    </source>
</evidence>
<evidence type="ECO:0000305" key="4"/>
<evidence type="ECO:0000305" key="5">
    <source>
    </source>
</evidence>
<evidence type="ECO:0007744" key="6">
    <source>
    </source>
</evidence>
<evidence type="ECO:0007744" key="7">
    <source>
    </source>
</evidence>
<proteinExistence type="evidence at protein level"/>
<feature type="signal peptide" evidence="1">
    <location>
        <begin position="1"/>
        <end position="25"/>
    </location>
</feature>
<feature type="chain" id="PRO_0000285948" description="Transmembrane protein 139">
    <location>
        <begin position="26"/>
        <end position="216"/>
    </location>
</feature>
<feature type="topological domain" description="Extracellular" evidence="1">
    <location>
        <begin position="26"/>
        <end position="34"/>
    </location>
</feature>
<feature type="transmembrane region" description="Helical" evidence="1">
    <location>
        <begin position="35"/>
        <end position="55"/>
    </location>
</feature>
<feature type="topological domain" description="Cytoplasmic" evidence="1">
    <location>
        <begin position="56"/>
        <end position="216"/>
    </location>
</feature>
<feature type="region of interest" description="Disordered" evidence="2">
    <location>
        <begin position="104"/>
        <end position="163"/>
    </location>
</feature>
<feature type="compositionally biased region" description="Basic and acidic residues" evidence="2">
    <location>
        <begin position="127"/>
        <end position="145"/>
    </location>
</feature>
<feature type="modified residue" description="Phosphoserine" evidence="7">
    <location>
        <position position="146"/>
    </location>
</feature>
<feature type="modified residue" description="Phosphoserine" evidence="6">
    <location>
        <position position="155"/>
    </location>
</feature>
<feature type="sequence conflict" description="In Ref. 2; BAD18786." evidence="4" ref="2">
    <original>D</original>
    <variation>G</variation>
    <location>
        <position position="203"/>
    </location>
</feature>
<feature type="sequence conflict" description="In Ref. 3; BAC11382." evidence="4" ref="3">
    <original>Y</original>
    <variation>C</variation>
    <location>
        <position position="209"/>
    </location>
</feature>
<reference key="1">
    <citation type="journal article" date="2003" name="Genome Res.">
        <title>The secreted protein discovery initiative (SPDI), a large-scale effort to identify novel human secreted and transmembrane proteins: a bioinformatics assessment.</title>
        <authorList>
            <person name="Clark H.F."/>
            <person name="Gurney A.L."/>
            <person name="Abaya E."/>
            <person name="Baker K."/>
            <person name="Baldwin D.T."/>
            <person name="Brush J."/>
            <person name="Chen J."/>
            <person name="Chow B."/>
            <person name="Chui C."/>
            <person name="Crowley C."/>
            <person name="Currell B."/>
            <person name="Deuel B."/>
            <person name="Dowd P."/>
            <person name="Eaton D."/>
            <person name="Foster J.S."/>
            <person name="Grimaldi C."/>
            <person name="Gu Q."/>
            <person name="Hass P.E."/>
            <person name="Heldens S."/>
            <person name="Huang A."/>
            <person name="Kim H.S."/>
            <person name="Klimowski L."/>
            <person name="Jin Y."/>
            <person name="Johnson S."/>
            <person name="Lee J."/>
            <person name="Lewis L."/>
            <person name="Liao D."/>
            <person name="Mark M.R."/>
            <person name="Robbie E."/>
            <person name="Sanchez C."/>
            <person name="Schoenfeld J."/>
            <person name="Seshagiri S."/>
            <person name="Simmons L."/>
            <person name="Singh J."/>
            <person name="Smith V."/>
            <person name="Stinson J."/>
            <person name="Vagts A."/>
            <person name="Vandlen R.L."/>
            <person name="Watanabe C."/>
            <person name="Wieand D."/>
            <person name="Woods K."/>
            <person name="Xie M.-H."/>
            <person name="Yansura D.G."/>
            <person name="Yi S."/>
            <person name="Yu G."/>
            <person name="Yuan J."/>
            <person name="Zhang M."/>
            <person name="Zhang Z."/>
            <person name="Goddard A.D."/>
            <person name="Wood W.I."/>
            <person name="Godowski P.J."/>
            <person name="Gray A.M."/>
        </authorList>
    </citation>
    <scope>NUCLEOTIDE SEQUENCE [LARGE SCALE MRNA]</scope>
</reference>
<reference key="2">
    <citation type="journal article" date="2004" name="Nat. Genet.">
        <title>Complete sequencing and characterization of 21,243 full-length human cDNAs.</title>
        <authorList>
            <person name="Ota T."/>
            <person name="Suzuki Y."/>
            <person name="Nishikawa T."/>
            <person name="Otsuki T."/>
            <person name="Sugiyama T."/>
            <person name="Irie R."/>
            <person name="Wakamatsu A."/>
            <person name="Hayashi K."/>
            <person name="Sato H."/>
            <person name="Nagai K."/>
            <person name="Kimura K."/>
            <person name="Makita H."/>
            <person name="Sekine M."/>
            <person name="Obayashi M."/>
            <person name="Nishi T."/>
            <person name="Shibahara T."/>
            <person name="Tanaka T."/>
            <person name="Ishii S."/>
            <person name="Yamamoto J."/>
            <person name="Saito K."/>
            <person name="Kawai Y."/>
            <person name="Isono Y."/>
            <person name="Nakamura Y."/>
            <person name="Nagahari K."/>
            <person name="Murakami K."/>
            <person name="Yasuda T."/>
            <person name="Iwayanagi T."/>
            <person name="Wagatsuma M."/>
            <person name="Shiratori A."/>
            <person name="Sudo H."/>
            <person name="Hosoiri T."/>
            <person name="Kaku Y."/>
            <person name="Kodaira H."/>
            <person name="Kondo H."/>
            <person name="Sugawara M."/>
            <person name="Takahashi M."/>
            <person name="Kanda K."/>
            <person name="Yokoi T."/>
            <person name="Furuya T."/>
            <person name="Kikkawa E."/>
            <person name="Omura Y."/>
            <person name="Abe K."/>
            <person name="Kamihara K."/>
            <person name="Katsuta N."/>
            <person name="Sato K."/>
            <person name="Tanikawa M."/>
            <person name="Yamazaki M."/>
            <person name="Ninomiya K."/>
            <person name="Ishibashi T."/>
            <person name="Yamashita H."/>
            <person name="Murakawa K."/>
            <person name="Fujimori K."/>
            <person name="Tanai H."/>
            <person name="Kimata M."/>
            <person name="Watanabe M."/>
            <person name="Hiraoka S."/>
            <person name="Chiba Y."/>
            <person name="Ishida S."/>
            <person name="Ono Y."/>
            <person name="Takiguchi S."/>
            <person name="Watanabe S."/>
            <person name="Yosida M."/>
            <person name="Hotuta T."/>
            <person name="Kusano J."/>
            <person name="Kanehori K."/>
            <person name="Takahashi-Fujii A."/>
            <person name="Hara H."/>
            <person name="Tanase T.-O."/>
            <person name="Nomura Y."/>
            <person name="Togiya S."/>
            <person name="Komai F."/>
            <person name="Hara R."/>
            <person name="Takeuchi K."/>
            <person name="Arita M."/>
            <person name="Imose N."/>
            <person name="Musashino K."/>
            <person name="Yuuki H."/>
            <person name="Oshima A."/>
            <person name="Sasaki N."/>
            <person name="Aotsuka S."/>
            <person name="Yoshikawa Y."/>
            <person name="Matsunawa H."/>
            <person name="Ichihara T."/>
            <person name="Shiohata N."/>
            <person name="Sano S."/>
            <person name="Moriya S."/>
            <person name="Momiyama H."/>
            <person name="Satoh N."/>
            <person name="Takami S."/>
            <person name="Terashima Y."/>
            <person name="Suzuki O."/>
            <person name="Nakagawa S."/>
            <person name="Senoh A."/>
            <person name="Mizoguchi H."/>
            <person name="Goto Y."/>
            <person name="Shimizu F."/>
            <person name="Wakebe H."/>
            <person name="Hishigaki H."/>
            <person name="Watanabe T."/>
            <person name="Sugiyama A."/>
            <person name="Takemoto M."/>
            <person name="Kawakami B."/>
            <person name="Yamazaki M."/>
            <person name="Watanabe K."/>
            <person name="Kumagai A."/>
            <person name="Itakura S."/>
            <person name="Fukuzumi Y."/>
            <person name="Fujimori Y."/>
            <person name="Komiyama M."/>
            <person name="Tashiro H."/>
            <person name="Tanigami A."/>
            <person name="Fujiwara T."/>
            <person name="Ono T."/>
            <person name="Yamada K."/>
            <person name="Fujii Y."/>
            <person name="Ozaki K."/>
            <person name="Hirao M."/>
            <person name="Ohmori Y."/>
            <person name="Kawabata A."/>
            <person name="Hikiji T."/>
            <person name="Kobatake N."/>
            <person name="Inagaki H."/>
            <person name="Ikema Y."/>
            <person name="Okamoto S."/>
            <person name="Okitani R."/>
            <person name="Kawakami T."/>
            <person name="Noguchi S."/>
            <person name="Itoh T."/>
            <person name="Shigeta K."/>
            <person name="Senba T."/>
            <person name="Matsumura K."/>
            <person name="Nakajima Y."/>
            <person name="Mizuno T."/>
            <person name="Morinaga M."/>
            <person name="Sasaki M."/>
            <person name="Togashi T."/>
            <person name="Oyama M."/>
            <person name="Hata H."/>
            <person name="Watanabe M."/>
            <person name="Komatsu T."/>
            <person name="Mizushima-Sugano J."/>
            <person name="Satoh T."/>
            <person name="Shirai Y."/>
            <person name="Takahashi Y."/>
            <person name="Nakagawa K."/>
            <person name="Okumura K."/>
            <person name="Nagase T."/>
            <person name="Nomura N."/>
            <person name="Kikuchi H."/>
            <person name="Masuho Y."/>
            <person name="Yamashita R."/>
            <person name="Nakai K."/>
            <person name="Yada T."/>
            <person name="Nakamura Y."/>
            <person name="Ohara O."/>
            <person name="Isogai T."/>
            <person name="Sugano S."/>
        </authorList>
    </citation>
    <scope>NUCLEOTIDE SEQUENCE [LARGE SCALE MRNA]</scope>
    <source>
        <tissue>Hepatoma</tissue>
        <tissue>Small intestine</tissue>
    </source>
</reference>
<reference key="3">
    <citation type="journal article" date="2005" name="DNA Res.">
        <title>Signal sequence and keyword trap in silico for selection of full-length human cDNAs encoding secretion or membrane proteins from oligo-capped cDNA libraries.</title>
        <authorList>
            <person name="Otsuki T."/>
            <person name="Ota T."/>
            <person name="Nishikawa T."/>
            <person name="Hayashi K."/>
            <person name="Suzuki Y."/>
            <person name="Yamamoto J."/>
            <person name="Wakamatsu A."/>
            <person name="Kimura K."/>
            <person name="Sakamoto K."/>
            <person name="Hatano N."/>
            <person name="Kawai Y."/>
            <person name="Ishii S."/>
            <person name="Saito K."/>
            <person name="Kojima S."/>
            <person name="Sugiyama T."/>
            <person name="Ono T."/>
            <person name="Okano K."/>
            <person name="Yoshikawa Y."/>
            <person name="Aotsuka S."/>
            <person name="Sasaki N."/>
            <person name="Hattori A."/>
            <person name="Okumura K."/>
            <person name="Nagai K."/>
            <person name="Sugano S."/>
            <person name="Isogai T."/>
        </authorList>
    </citation>
    <scope>NUCLEOTIDE SEQUENCE [LARGE SCALE MRNA]</scope>
    <source>
        <tissue>Placenta</tissue>
    </source>
</reference>
<reference key="4">
    <citation type="journal article" date="2003" name="Science">
        <title>Human chromosome 7: DNA sequence and biology.</title>
        <authorList>
            <person name="Scherer S.W."/>
            <person name="Cheung J."/>
            <person name="MacDonald J.R."/>
            <person name="Osborne L.R."/>
            <person name="Nakabayashi K."/>
            <person name="Herbrick J.-A."/>
            <person name="Carson A.R."/>
            <person name="Parker-Katiraee L."/>
            <person name="Skaug J."/>
            <person name="Khaja R."/>
            <person name="Zhang J."/>
            <person name="Hudek A.K."/>
            <person name="Li M."/>
            <person name="Haddad M."/>
            <person name="Duggan G.E."/>
            <person name="Fernandez B.A."/>
            <person name="Kanematsu E."/>
            <person name="Gentles S."/>
            <person name="Christopoulos C.C."/>
            <person name="Choufani S."/>
            <person name="Kwasnicka D."/>
            <person name="Zheng X.H."/>
            <person name="Lai Z."/>
            <person name="Nusskern D.R."/>
            <person name="Zhang Q."/>
            <person name="Gu Z."/>
            <person name="Lu F."/>
            <person name="Zeesman S."/>
            <person name="Nowaczyk M.J."/>
            <person name="Teshima I."/>
            <person name="Chitayat D."/>
            <person name="Shuman C."/>
            <person name="Weksberg R."/>
            <person name="Zackai E.H."/>
            <person name="Grebe T.A."/>
            <person name="Cox S.R."/>
            <person name="Kirkpatrick S.J."/>
            <person name="Rahman N."/>
            <person name="Friedman J.M."/>
            <person name="Heng H.H.Q."/>
            <person name="Pelicci P.G."/>
            <person name="Lo-Coco F."/>
            <person name="Belloni E."/>
            <person name="Shaffer L.G."/>
            <person name="Pober B."/>
            <person name="Morton C.C."/>
            <person name="Gusella J.F."/>
            <person name="Bruns G.A.P."/>
            <person name="Korf B.R."/>
            <person name="Quade B.J."/>
            <person name="Ligon A.H."/>
            <person name="Ferguson H."/>
            <person name="Higgins A.W."/>
            <person name="Leach N.T."/>
            <person name="Herrick S.R."/>
            <person name="Lemyre E."/>
            <person name="Farra C.G."/>
            <person name="Kim H.-G."/>
            <person name="Summers A.M."/>
            <person name="Gripp K.W."/>
            <person name="Roberts W."/>
            <person name="Szatmari P."/>
            <person name="Winsor E.J.T."/>
            <person name="Grzeschik K.-H."/>
            <person name="Teebi A."/>
            <person name="Minassian B.A."/>
            <person name="Kere J."/>
            <person name="Armengol L."/>
            <person name="Pujana M.A."/>
            <person name="Estivill X."/>
            <person name="Wilson M.D."/>
            <person name="Koop B.F."/>
            <person name="Tosi S."/>
            <person name="Moore G.E."/>
            <person name="Boright A.P."/>
            <person name="Zlotorynski E."/>
            <person name="Kerem B."/>
            <person name="Kroisel P.M."/>
            <person name="Petek E."/>
            <person name="Oscier D.G."/>
            <person name="Mould S.J."/>
            <person name="Doehner H."/>
            <person name="Doehner K."/>
            <person name="Rommens J.M."/>
            <person name="Vincent J.B."/>
            <person name="Venter J.C."/>
            <person name="Li P.W."/>
            <person name="Mural R.J."/>
            <person name="Adams M.D."/>
            <person name="Tsui L.-C."/>
        </authorList>
    </citation>
    <scope>NUCLEOTIDE SEQUENCE [LARGE SCALE GENOMIC DNA]</scope>
</reference>
<reference key="5">
    <citation type="submission" date="2005-09" db="EMBL/GenBank/DDBJ databases">
        <authorList>
            <person name="Mural R.J."/>
            <person name="Istrail S."/>
            <person name="Sutton G.G."/>
            <person name="Florea L."/>
            <person name="Halpern A.L."/>
            <person name="Mobarry C.M."/>
            <person name="Lippert R."/>
            <person name="Walenz B."/>
            <person name="Shatkay H."/>
            <person name="Dew I."/>
            <person name="Miller J.R."/>
            <person name="Flanigan M.J."/>
            <person name="Edwards N.J."/>
            <person name="Bolanos R."/>
            <person name="Fasulo D."/>
            <person name="Halldorsson B.V."/>
            <person name="Hannenhalli S."/>
            <person name="Turner R."/>
            <person name="Yooseph S."/>
            <person name="Lu F."/>
            <person name="Nusskern D.R."/>
            <person name="Shue B.C."/>
            <person name="Zheng X.H."/>
            <person name="Zhong F."/>
            <person name="Delcher A.L."/>
            <person name="Huson D.H."/>
            <person name="Kravitz S.A."/>
            <person name="Mouchard L."/>
            <person name="Reinert K."/>
            <person name="Remington K.A."/>
            <person name="Clark A.G."/>
            <person name="Waterman M.S."/>
            <person name="Eichler E.E."/>
            <person name="Adams M.D."/>
            <person name="Hunkapiller M.W."/>
            <person name="Myers E.W."/>
            <person name="Venter J.C."/>
        </authorList>
    </citation>
    <scope>NUCLEOTIDE SEQUENCE [LARGE SCALE GENOMIC DNA]</scope>
</reference>
<reference key="6">
    <citation type="journal article" date="2004" name="Genome Res.">
        <title>The status, quality, and expansion of the NIH full-length cDNA project: the Mammalian Gene Collection (MGC).</title>
        <authorList>
            <consortium name="The MGC Project Team"/>
        </authorList>
    </citation>
    <scope>NUCLEOTIDE SEQUENCE [LARGE SCALE MRNA]</scope>
    <source>
        <tissue>Bone marrow</tissue>
        <tissue>Lung</tissue>
    </source>
</reference>
<reference key="7">
    <citation type="journal article" date="2008" name="Proc. Natl. Acad. Sci. U.S.A.">
        <title>A quantitative atlas of mitotic phosphorylation.</title>
        <authorList>
            <person name="Dephoure N."/>
            <person name="Zhou C."/>
            <person name="Villen J."/>
            <person name="Beausoleil S.A."/>
            <person name="Bakalarski C.E."/>
            <person name="Elledge S.J."/>
            <person name="Gygi S.P."/>
        </authorList>
    </citation>
    <scope>IDENTIFICATION BY MASS SPECTROMETRY [LARGE SCALE ANALYSIS]</scope>
    <source>
        <tissue>Cervix carcinoma</tissue>
    </source>
</reference>
<reference key="8">
    <citation type="journal article" date="2010" name="Sci. Signal.">
        <title>Quantitative phosphoproteomics reveals widespread full phosphorylation site occupancy during mitosis.</title>
        <authorList>
            <person name="Olsen J.V."/>
            <person name="Vermeulen M."/>
            <person name="Santamaria A."/>
            <person name="Kumar C."/>
            <person name="Miller M.L."/>
            <person name="Jensen L.J."/>
            <person name="Gnad F."/>
            <person name="Cox J."/>
            <person name="Jensen T.S."/>
            <person name="Nigg E.A."/>
            <person name="Brunak S."/>
            <person name="Mann M."/>
        </authorList>
    </citation>
    <scope>PHOSPHORYLATION [LARGE SCALE ANALYSIS] AT SER-155</scope>
    <scope>IDENTIFICATION BY MASS SPECTROMETRY [LARGE SCALE ANALYSIS]</scope>
    <source>
        <tissue>Cervix carcinoma</tissue>
    </source>
</reference>
<reference key="9">
    <citation type="journal article" date="2013" name="J. Proteome Res.">
        <title>Toward a comprehensive characterization of a human cancer cell phosphoproteome.</title>
        <authorList>
            <person name="Zhou H."/>
            <person name="Di Palma S."/>
            <person name="Preisinger C."/>
            <person name="Peng M."/>
            <person name="Polat A.N."/>
            <person name="Heck A.J."/>
            <person name="Mohammed S."/>
        </authorList>
    </citation>
    <scope>PHOSPHORYLATION [LARGE SCALE ANALYSIS] AT SER-146</scope>
    <scope>IDENTIFICATION BY MASS SPECTROMETRY [LARGE SCALE ANALYSIS]</scope>
    <source>
        <tissue>Cervix carcinoma</tissue>
    </source>
</reference>
<reference key="10">
    <citation type="journal article" date="2015" name="Biochem. Biophys. Res. Commun.">
        <title>Transmembrane protein 139 (TMEM139) interacts with human kidney isoform of anion exchanger 1 (kAE1).</title>
        <authorList>
            <person name="Nuiplot N.O."/>
            <person name="Junking M."/>
            <person name="Duangtum N."/>
            <person name="Khunchai S."/>
            <person name="Sawasdee N."/>
            <person name="Yenchitsomanus P.T."/>
            <person name="Akkarapatumwong V."/>
        </authorList>
    </citation>
    <scope>FUNCTION</scope>
    <scope>INTERACTION WITH SLC4A1</scope>
</reference>
<keyword id="KW-0472">Membrane</keyword>
<keyword id="KW-0597">Phosphoprotein</keyword>
<keyword id="KW-1267">Proteomics identification</keyword>
<keyword id="KW-1185">Reference proteome</keyword>
<keyword id="KW-0732">Signal</keyword>
<keyword id="KW-0812">Transmembrane</keyword>
<keyword id="KW-1133">Transmembrane helix</keyword>
<name>TM139_HUMAN</name>
<comment type="function">
    <text evidence="5">May be involved in cellular trafficking of proteins such as SLC4A1.</text>
</comment>
<comment type="subunit">
    <text evidence="3">Interacts with isoform 2 of SLC4A1 (PubMed:26049106).</text>
</comment>
<comment type="interaction">
    <interactant intactId="EBI-7238458">
        <id>Q8IV31</id>
    </interactant>
    <interactant intactId="EBI-348517">
        <id>O95870</id>
        <label>ABHD16A</label>
    </interactant>
    <organismsDiffer>false</organismsDiffer>
    <experiments>3</experiments>
</comment>
<comment type="interaction">
    <interactant intactId="EBI-7238458">
        <id>Q8IV31</id>
    </interactant>
    <interactant intactId="EBI-11522760">
        <id>Q6RW13-2</id>
        <label>AGTRAP</label>
    </interactant>
    <organismsDiffer>false</organismsDiffer>
    <experiments>3</experiments>
</comment>
<comment type="interaction">
    <interactant intactId="EBI-7238458">
        <id>Q8IV31</id>
    </interactant>
    <interactant intactId="EBI-4290634">
        <id>Q9BQE5</id>
        <label>APOL2</label>
    </interactant>
    <organismsDiffer>false</organismsDiffer>
    <experiments>3</experiments>
</comment>
<comment type="interaction">
    <interactant intactId="EBI-7238458">
        <id>Q8IV31</id>
    </interactant>
    <interactant intactId="EBI-721179">
        <id>P27449</id>
        <label>ATP6V0C</label>
    </interactant>
    <organismsDiffer>false</organismsDiffer>
    <experiments>3</experiments>
</comment>
<comment type="interaction">
    <interactant intactId="EBI-7238458">
        <id>Q8IV31</id>
    </interactant>
    <interactant intactId="EBI-707714">
        <id>Q92843</id>
        <label>BCL2L2</label>
    </interactant>
    <organismsDiffer>false</organismsDiffer>
    <experiments>3</experiments>
</comment>
<comment type="interaction">
    <interactant intactId="EBI-7238458">
        <id>Q8IV31</id>
    </interactant>
    <interactant intactId="EBI-10210332">
        <id>P48509</id>
        <label>CD151</label>
    </interactant>
    <organismsDiffer>false</organismsDiffer>
    <experiments>3</experiments>
</comment>
<comment type="interaction">
    <interactant intactId="EBI-7238458">
        <id>Q8IV31</id>
    </interactant>
    <interactant intactId="EBI-3913685">
        <id>O95674</id>
        <label>CDS2</label>
    </interactant>
    <organismsDiffer>false</organismsDiffer>
    <experiments>3</experiments>
</comment>
<comment type="interaction">
    <interactant intactId="EBI-7238458">
        <id>Q8IV31</id>
    </interactant>
    <interactant intactId="EBI-6165897">
        <id>Q9NWW5</id>
        <label>CLN6</label>
    </interactant>
    <organismsDiffer>false</organismsDiffer>
    <experiments>3</experiments>
</comment>
<comment type="interaction">
    <interactant intactId="EBI-7238458">
        <id>Q8IV31</id>
    </interactant>
    <interactant intactId="EBI-11522780">
        <id>Q96DZ9-2</id>
        <label>CMTM5</label>
    </interactant>
    <organismsDiffer>false</organismsDiffer>
    <experiments>3</experiments>
</comment>
<comment type="interaction">
    <interactant intactId="EBI-7238458">
        <id>Q8IV31</id>
    </interactant>
    <interactant intactId="EBI-1058710">
        <id>O43169</id>
        <label>CYB5B</label>
    </interactant>
    <organismsDiffer>false</organismsDiffer>
    <experiments>3</experiments>
</comment>
<comment type="interaction">
    <interactant intactId="EBI-7238458">
        <id>Q8IV31</id>
    </interactant>
    <interactant intactId="EBI-12142299">
        <id>Q96IV6</id>
        <label>FAXDC2</label>
    </interactant>
    <organismsDiffer>false</organismsDiffer>
    <experiments>3</experiments>
</comment>
<comment type="interaction">
    <interactant intactId="EBI-7238458">
        <id>Q8IV31</id>
    </interactant>
    <interactant intactId="EBI-3914675">
        <id>O00180</id>
        <label>KCNK1</label>
    </interactant>
    <organismsDiffer>false</organismsDiffer>
    <experiments>3</experiments>
</comment>
<comment type="interaction">
    <interactant intactId="EBI-7238458">
        <id>Q8IV31</id>
    </interactant>
    <interactant intactId="EBI-750078">
        <id>Q13021</id>
        <label>MALL</label>
    </interactant>
    <organismsDiffer>false</organismsDiffer>
    <experiments>3</experiments>
</comment>
<comment type="interaction">
    <interactant intactId="EBI-7238458">
        <id>Q8IV31</id>
    </interactant>
    <interactant intactId="EBI-2341610">
        <id>Q9NX47</id>
        <label>MARCHF5</label>
    </interactant>
    <organismsDiffer>false</organismsDiffer>
    <experiments>3</experiments>
</comment>
<comment type="interaction">
    <interactant intactId="EBI-7238458">
        <id>Q8IV31</id>
    </interactant>
    <interactant intactId="EBI-8449636">
        <id>P30301</id>
        <label>MIP</label>
    </interactant>
    <organismsDiffer>false</organismsDiffer>
    <experiments>3</experiments>
</comment>
<comment type="interaction">
    <interactant intactId="EBI-7238458">
        <id>Q8IV31</id>
    </interactant>
    <interactant intactId="EBI-3921185">
        <id>Q9H115</id>
        <label>NAPB</label>
    </interactant>
    <organismsDiffer>false</organismsDiffer>
    <experiments>3</experiments>
</comment>
<comment type="interaction">
    <interactant intactId="EBI-7238458">
        <id>Q8IV31</id>
    </interactant>
    <interactant intactId="EBI-10317425">
        <id>Q9NZG7</id>
        <label>NINJ2</label>
    </interactant>
    <organismsDiffer>false</organismsDiffer>
    <experiments>3</experiments>
</comment>
<comment type="interaction">
    <interactant intactId="EBI-7238458">
        <id>Q8IV31</id>
    </interactant>
    <interactant intactId="EBI-3919611">
        <id>Q16617</id>
        <label>NKG7</label>
    </interactant>
    <organismsDiffer>false</organismsDiffer>
    <experiments>3</experiments>
</comment>
<comment type="interaction">
    <interactant intactId="EBI-7238458">
        <id>Q8IV31</id>
    </interactant>
    <interactant intactId="EBI-6380741">
        <id>P42857</id>
        <label>NSG1</label>
    </interactant>
    <organismsDiffer>false</organismsDiffer>
    <experiments>3</experiments>
</comment>
<comment type="interaction">
    <interactant intactId="EBI-7238458">
        <id>Q8IV31</id>
    </interactant>
    <interactant intactId="EBI-10485931">
        <id>Q5VZY2</id>
        <label>PLPP4</label>
    </interactant>
    <organismsDiffer>false</organismsDiffer>
    <experiments>3</experiments>
</comment>
<comment type="interaction">
    <interactant intactId="EBI-7238458">
        <id>Q8IV31</id>
    </interactant>
    <interactant intactId="EBI-2845982">
        <id>Q01453</id>
        <label>PMP22</label>
    </interactant>
    <organismsDiffer>false</organismsDiffer>
    <experiments>3</experiments>
</comment>
<comment type="interaction">
    <interactant intactId="EBI-7238458">
        <id>Q8IV31</id>
    </interactant>
    <interactant intactId="EBI-14210385">
        <id>Q59EV6</id>
        <label>PPGB</label>
    </interactant>
    <organismsDiffer>false</organismsDiffer>
    <experiments>3</experiments>
</comment>
<comment type="interaction">
    <interactant intactId="EBI-7238458">
        <id>Q8IV31</id>
    </interactant>
    <interactant intactId="EBI-1058865">
        <id>O75396</id>
        <label>SEC22B</label>
    </interactant>
    <organismsDiffer>false</organismsDiffer>
    <experiments>3</experiments>
</comment>
<comment type="interaction">
    <interactant intactId="EBI-7238458">
        <id>Q8IV31</id>
    </interactant>
    <interactant intactId="EBI-10197617">
        <id>P11686</id>
        <label>SFTPC</label>
    </interactant>
    <organismsDiffer>false</organismsDiffer>
    <experiments>3</experiments>
</comment>
<comment type="interaction">
    <interactant intactId="EBI-7238458">
        <id>Q8IV31</id>
    </interactant>
    <interactant intactId="EBI-10262251">
        <id>Q8IWU4</id>
        <label>SLC30A8</label>
    </interactant>
    <organismsDiffer>false</organismsDiffer>
    <experiments>3</experiments>
</comment>
<comment type="interaction">
    <interactant intactId="EBI-7238458">
        <id>Q8IV31</id>
    </interactant>
    <interactant intactId="EBI-12870360">
        <id>P78382</id>
        <label>SLC35A1</label>
    </interactant>
    <organismsDiffer>false</organismsDiffer>
    <experiments>3</experiments>
</comment>
<comment type="interaction">
    <interactant intactId="EBI-7238458">
        <id>Q8IV31</id>
    </interactant>
    <interactant intactId="EBI-8640191">
        <id>Q9NRQ5</id>
        <label>SMCO4</label>
    </interactant>
    <organismsDiffer>false</organismsDiffer>
    <experiments>3</experiments>
</comment>
<comment type="interaction">
    <interactant intactId="EBI-7238458">
        <id>Q8IV31</id>
    </interactant>
    <interactant intactId="EBI-12845616">
        <id>Q6UX40</id>
        <label>TMEM107</label>
    </interactant>
    <organismsDiffer>false</organismsDiffer>
    <experiments>3</experiments>
</comment>
<comment type="interaction">
    <interactant intactId="EBI-7238458">
        <id>Q8IV31</id>
    </interactant>
    <interactant intactId="EBI-10171534">
        <id>A0PK00</id>
        <label>TMEM120B</label>
    </interactant>
    <organismsDiffer>false</organismsDiffer>
    <experiments>3</experiments>
</comment>
<comment type="interaction">
    <interactant intactId="EBI-7238458">
        <id>Q8IV31</id>
    </interactant>
    <interactant intactId="EBI-741829">
        <id>Q96HH6</id>
        <label>TMEM19</label>
    </interactant>
    <organismsDiffer>false</organismsDiffer>
    <experiments>3</experiments>
</comment>
<comment type="interaction">
    <interactant intactId="EBI-7238458">
        <id>Q8IV31</id>
    </interactant>
    <interactant intactId="EBI-2852148">
        <id>Q9H2L4</id>
        <label>TMEM60</label>
    </interactant>
    <organismsDiffer>false</organismsDiffer>
    <experiments>3</experiments>
</comment>
<comment type="interaction">
    <interactant intactId="EBI-7238458">
        <id>Q8IV31</id>
    </interactant>
    <interactant intactId="EBI-765817">
        <id>Q9Y228</id>
        <label>TRAF3IP3</label>
    </interactant>
    <organismsDiffer>false</organismsDiffer>
    <experiments>3</experiments>
</comment>
<comment type="interaction">
    <interactant intactId="EBI-7238458">
        <id>Q8IV31</id>
    </interactant>
    <interactant intactId="EBI-2819725">
        <id>Q9Y5Z9</id>
        <label>UBIAD1</label>
    </interactant>
    <organismsDiffer>false</organismsDiffer>
    <experiments>3</experiments>
</comment>
<comment type="interaction">
    <interactant intactId="EBI-7238458">
        <id>Q8IV31</id>
    </interactant>
    <interactant intactId="EBI-12237619">
        <id>O75841</id>
        <label>UPK1B</label>
    </interactant>
    <organismsDiffer>false</organismsDiffer>
    <experiments>3</experiments>
</comment>
<comment type="interaction">
    <interactant intactId="EBI-7238458">
        <id>Q8IV31</id>
    </interactant>
    <interactant intactId="EBI-10191195">
        <id>O95183</id>
        <label>VAMP5</label>
    </interactant>
    <organismsDiffer>false</organismsDiffer>
    <experiments>3</experiments>
</comment>
<comment type="interaction">
    <interactant intactId="EBI-7238458">
        <id>Q8IV31</id>
    </interactant>
    <interactant intactId="EBI-1044059">
        <id>P46937</id>
        <label>YAP1</label>
    </interactant>
    <organismsDiffer>false</organismsDiffer>
    <experiments>2</experiments>
</comment>
<comment type="interaction">
    <interactant intactId="EBI-7238458">
        <id>Q8IV31</id>
    </interactant>
    <interactant intactId="EBI-2799703">
        <id>O95070</id>
        <label>YIF1A</label>
    </interactant>
    <organismsDiffer>false</organismsDiffer>
    <experiments>3</experiments>
</comment>
<comment type="interaction">
    <interactant intactId="EBI-7238458">
        <id>Q8IV31</id>
    </interactant>
    <interactant intactId="EBI-718439">
        <id>O95159</id>
        <label>ZFPL1</label>
    </interactant>
    <organismsDiffer>false</organismsDiffer>
    <experiments>3</experiments>
</comment>
<comment type="subcellular location">
    <subcellularLocation>
        <location evidence="4">Membrane</location>
        <topology evidence="4">Single-pass type I membrane protein</topology>
    </subcellularLocation>
</comment>
<comment type="sequence caution" evidence="4">
    <conflict type="erroneous initiation">
        <sequence resource="EMBL-CDS" id="AAH16719"/>
    </conflict>
    <text>Extended N-terminus.</text>
</comment>